<sequence length="95" mass="10965">MGAVFAIIGGFALDSPILRLYLDQLSLNHFTDIVGATKVSSLNIPWPLRIPRRIRLPGRLYNMKYCFINRLIHFPNCRNSNNFYNSEKPSPQNEK</sequence>
<feature type="signal peptide">
    <location>
        <begin position="1"/>
        <end position="20"/>
    </location>
</feature>
<feature type="chain" id="PRO_0000020803" description="Blastocyst protein 4">
    <location>
        <begin position="21"/>
        <end position="95"/>
    </location>
</feature>
<name>BCP4_RABIT</name>
<keyword id="KW-1185">Reference proteome</keyword>
<keyword id="KW-0732">Signal</keyword>
<reference key="1">
    <citation type="journal article" date="1991" name="Sci. Sin.">
        <title>cDNA cloning of a stage-specific peptide from rabbit early blastocyst.</title>
        <authorList>
            <person name="Yang W."/>
            <person name="Shen X."/>
            <person name="Cao Y."/>
            <person name="Chang C.Y."/>
        </authorList>
    </citation>
    <scope>NUCLEOTIDE SEQUENCE [MRNA]</scope>
    <source>
        <strain>Angola</strain>
    </source>
</reference>
<protein>
    <recommendedName>
        <fullName>Blastocyst protein 4</fullName>
    </recommendedName>
</protein>
<dbReference type="EMBL" id="L04689">
    <property type="protein sequence ID" value="AAA31170.1"/>
    <property type="molecule type" value="mRNA"/>
</dbReference>
<dbReference type="PIR" id="I46684">
    <property type="entry name" value="I46684"/>
</dbReference>
<dbReference type="InParanoid" id="Q02247"/>
<dbReference type="Proteomes" id="UP000001811">
    <property type="component" value="Unplaced"/>
</dbReference>
<accession>Q02247</accession>
<organism>
    <name type="scientific">Oryctolagus cuniculus</name>
    <name type="common">Rabbit</name>
    <dbReference type="NCBI Taxonomy" id="9986"/>
    <lineage>
        <taxon>Eukaryota</taxon>
        <taxon>Metazoa</taxon>
        <taxon>Chordata</taxon>
        <taxon>Craniata</taxon>
        <taxon>Vertebrata</taxon>
        <taxon>Euteleostomi</taxon>
        <taxon>Mammalia</taxon>
        <taxon>Eutheria</taxon>
        <taxon>Euarchontoglires</taxon>
        <taxon>Glires</taxon>
        <taxon>Lagomorpha</taxon>
        <taxon>Leporidae</taxon>
        <taxon>Oryctolagus</taxon>
    </lineage>
</organism>
<proteinExistence type="predicted"/>